<dbReference type="EMBL" id="CP001133">
    <property type="protein sequence ID" value="ACH63411.1"/>
    <property type="molecule type" value="Genomic_DNA"/>
</dbReference>
<dbReference type="RefSeq" id="WP_012534636.1">
    <property type="nucleotide sequence ID" value="NC_011186.1"/>
</dbReference>
<dbReference type="SMR" id="B5EUH0"/>
<dbReference type="KEGG" id="vfm:VFMJ11_A0789"/>
<dbReference type="HOGENOM" id="CLU_097408_2_0_6"/>
<dbReference type="Proteomes" id="UP000001857">
    <property type="component" value="Chromosome II"/>
</dbReference>
<dbReference type="GO" id="GO:0005829">
    <property type="term" value="C:cytosol"/>
    <property type="evidence" value="ECO:0007669"/>
    <property type="project" value="TreeGrafter"/>
</dbReference>
<dbReference type="GO" id="GO:0005960">
    <property type="term" value="C:glycine cleavage complex"/>
    <property type="evidence" value="ECO:0007669"/>
    <property type="project" value="InterPro"/>
</dbReference>
<dbReference type="GO" id="GO:0019464">
    <property type="term" value="P:glycine decarboxylation via glycine cleavage system"/>
    <property type="evidence" value="ECO:0007669"/>
    <property type="project" value="UniProtKB-UniRule"/>
</dbReference>
<dbReference type="CDD" id="cd06848">
    <property type="entry name" value="GCS_H"/>
    <property type="match status" value="1"/>
</dbReference>
<dbReference type="Gene3D" id="2.40.50.100">
    <property type="match status" value="1"/>
</dbReference>
<dbReference type="HAMAP" id="MF_00272">
    <property type="entry name" value="GcvH"/>
    <property type="match status" value="1"/>
</dbReference>
<dbReference type="InterPro" id="IPR003016">
    <property type="entry name" value="2-oxoA_DH_lipoyl-BS"/>
</dbReference>
<dbReference type="InterPro" id="IPR000089">
    <property type="entry name" value="Biotin_lipoyl"/>
</dbReference>
<dbReference type="InterPro" id="IPR002930">
    <property type="entry name" value="GCV_H"/>
</dbReference>
<dbReference type="InterPro" id="IPR033753">
    <property type="entry name" value="GCV_H/Fam206"/>
</dbReference>
<dbReference type="InterPro" id="IPR017453">
    <property type="entry name" value="GCV_H_sub"/>
</dbReference>
<dbReference type="InterPro" id="IPR011053">
    <property type="entry name" value="Single_hybrid_motif"/>
</dbReference>
<dbReference type="NCBIfam" id="TIGR00527">
    <property type="entry name" value="gcvH"/>
    <property type="match status" value="1"/>
</dbReference>
<dbReference type="NCBIfam" id="NF002270">
    <property type="entry name" value="PRK01202.1"/>
    <property type="match status" value="1"/>
</dbReference>
<dbReference type="PANTHER" id="PTHR11715">
    <property type="entry name" value="GLYCINE CLEAVAGE SYSTEM H PROTEIN"/>
    <property type="match status" value="1"/>
</dbReference>
<dbReference type="PANTHER" id="PTHR11715:SF3">
    <property type="entry name" value="GLYCINE CLEAVAGE SYSTEM H PROTEIN-RELATED"/>
    <property type="match status" value="1"/>
</dbReference>
<dbReference type="Pfam" id="PF01597">
    <property type="entry name" value="GCV_H"/>
    <property type="match status" value="1"/>
</dbReference>
<dbReference type="SUPFAM" id="SSF51230">
    <property type="entry name" value="Single hybrid motif"/>
    <property type="match status" value="1"/>
</dbReference>
<dbReference type="PROSITE" id="PS50968">
    <property type="entry name" value="BIOTINYL_LIPOYL"/>
    <property type="match status" value="1"/>
</dbReference>
<dbReference type="PROSITE" id="PS00189">
    <property type="entry name" value="LIPOYL"/>
    <property type="match status" value="1"/>
</dbReference>
<accession>B5EUH0</accession>
<reference key="1">
    <citation type="submission" date="2008-08" db="EMBL/GenBank/DDBJ databases">
        <title>Complete sequence of Vibrio fischeri strain MJ11.</title>
        <authorList>
            <person name="Mandel M.J."/>
            <person name="Stabb E.V."/>
            <person name="Ruby E.G."/>
            <person name="Ferriera S."/>
            <person name="Johnson J."/>
            <person name="Kravitz S."/>
            <person name="Beeson K."/>
            <person name="Sutton G."/>
            <person name="Rogers Y.-H."/>
            <person name="Friedman R."/>
            <person name="Frazier M."/>
            <person name="Venter J.C."/>
        </authorList>
    </citation>
    <scope>NUCLEOTIDE SEQUENCE [LARGE SCALE GENOMIC DNA]</scope>
    <source>
        <strain>MJ11</strain>
    </source>
</reference>
<name>GCSH_ALIFM</name>
<feature type="chain" id="PRO_1000114559" description="Glycine cleavage system H protein">
    <location>
        <begin position="1"/>
        <end position="126"/>
    </location>
</feature>
<feature type="domain" description="Lipoyl-binding" evidence="2">
    <location>
        <begin position="21"/>
        <end position="103"/>
    </location>
</feature>
<feature type="modified residue" description="N6-lipoyllysine" evidence="1">
    <location>
        <position position="62"/>
    </location>
</feature>
<organism>
    <name type="scientific">Aliivibrio fischeri (strain MJ11)</name>
    <name type="common">Vibrio fischeri</name>
    <dbReference type="NCBI Taxonomy" id="388396"/>
    <lineage>
        <taxon>Bacteria</taxon>
        <taxon>Pseudomonadati</taxon>
        <taxon>Pseudomonadota</taxon>
        <taxon>Gammaproteobacteria</taxon>
        <taxon>Vibrionales</taxon>
        <taxon>Vibrionaceae</taxon>
        <taxon>Aliivibrio</taxon>
    </lineage>
</organism>
<evidence type="ECO:0000255" key="1">
    <source>
        <dbReference type="HAMAP-Rule" id="MF_00272"/>
    </source>
</evidence>
<evidence type="ECO:0000255" key="2">
    <source>
        <dbReference type="PROSITE-ProRule" id="PRU01066"/>
    </source>
</evidence>
<proteinExistence type="inferred from homology"/>
<comment type="function">
    <text evidence="1">The glycine cleavage system catalyzes the degradation of glycine. The H protein shuttles the methylamine group of glycine from the P protein to the T protein.</text>
</comment>
<comment type="cofactor">
    <cofactor evidence="1">
        <name>(R)-lipoate</name>
        <dbReference type="ChEBI" id="CHEBI:83088"/>
    </cofactor>
    <text evidence="1">Binds 1 lipoyl cofactor covalently.</text>
</comment>
<comment type="subunit">
    <text evidence="1">The glycine cleavage system is composed of four proteins: P, T, L and H.</text>
</comment>
<comment type="similarity">
    <text evidence="1">Belongs to the GcvH family.</text>
</comment>
<keyword id="KW-0450">Lipoyl</keyword>
<protein>
    <recommendedName>
        <fullName evidence="1">Glycine cleavage system H protein</fullName>
    </recommendedName>
</protein>
<gene>
    <name evidence="1" type="primary">gcvH</name>
    <name type="ordered locus">VFMJ11_A0789</name>
</gene>
<sequence length="126" mass="13762">MEKDLKFTASHEWVRDNGDGTVTVGISDHAQGLLGDVVFVDLPDVDDEVTAGEGFSLVESVKAASDIYSPVTGVIVEINEELEDSPEQVNEEPYESGWIARIKLSDSSELESLIPSDTYLESLDEE</sequence>